<gene>
    <name type="primary">Tbx21</name>
    <name type="synonym">Tbet</name>
    <name type="synonym">Tblym</name>
</gene>
<protein>
    <recommendedName>
        <fullName>T-box transcription factor TBX21</fullName>
        <shortName>T-box protein 21</shortName>
    </recommendedName>
    <alternativeName>
        <fullName>T-cell-specific T-box transcription factor T-bet</fullName>
    </alternativeName>
    <alternativeName>
        <fullName>Transcription factor TBLYM</fullName>
    </alternativeName>
</protein>
<sequence length="530" mass="57852">MGIVEPGCGDMLTGTEPMPSDEGRGPGADQQHRFFYPEPGAQDPTDRRAGSSLGTPYSGGALVPAAPGRFLGSFAYPPRAQVAGFPGPGEFFPPPAGAEGYPPVDGYPAPDPRAGLYPGPREDYALPAGLEVSGKLRVALSNHLLWSKFNQHQTEMIITKQGRRMFPFLSFTVAGLEPTSHYRMFVDVVLVDQHHWRYQSGKWVQCGKAEGSMPGNRLYVHPDSPNTGAHWMRQEVSFGKLKLTNNKGASNNVTQMIVLQSLHKYQPRLHIVEVNDGEPEAACSASNTHVFTFQETQFIAVTAYQNAEITQLKIDNNPFAKGFRENFESMYASVDTSVPSPPGPNCQLLGGDPFSPLLSNQYPVPSRFYPDLPGQPKDMISQPYWLGTPREHSYEAEFRAVSMKPTLLPSAPGPTVPYYRGQDVLAPGAGWPVAPQYPPKMSPAGWFRPMRTLPMDPGLGSSEEQGSSPSLWPEVTSLQPEPSDSGLGEGDTKRRRISPYPSSGDSSSPAGAPSPFDKETEGQFYNYFPN</sequence>
<feature type="chain" id="PRO_0000184454" description="T-box transcription factor TBX21">
    <location>
        <begin position="1"/>
        <end position="530"/>
    </location>
</feature>
<feature type="DNA-binding region" description="T-box" evidence="2">
    <location>
        <begin position="140"/>
        <end position="325"/>
    </location>
</feature>
<feature type="region of interest" description="Disordered" evidence="3">
    <location>
        <begin position="1"/>
        <end position="55"/>
    </location>
</feature>
<feature type="region of interest" description="Disordered" evidence="3">
    <location>
        <begin position="444"/>
        <end position="530"/>
    </location>
</feature>
<feature type="compositionally biased region" description="Polar residues" evidence="3">
    <location>
        <begin position="462"/>
        <end position="482"/>
    </location>
</feature>
<feature type="compositionally biased region" description="Low complexity" evidence="3">
    <location>
        <begin position="498"/>
        <end position="515"/>
    </location>
</feature>
<feature type="site" description="Essential for its interaction with RUNX1 and its ability to inhibit RUNX1 transcriptional activity and suppress TH17 lineage development" evidence="9">
    <location>
        <position position="304"/>
    </location>
</feature>
<feature type="modified residue" description="Phosphoserine" evidence="14">
    <location>
        <position position="52"/>
    </location>
</feature>
<feature type="modified residue" description="Phosphothreonine" evidence="14">
    <location>
        <position position="55"/>
    </location>
</feature>
<feature type="modified residue" description="Phosphotyrosine" evidence="14">
    <location>
        <position position="76"/>
    </location>
</feature>
<feature type="modified residue" description="Phosphotyrosine" evidence="14">
    <location>
        <position position="117"/>
    </location>
</feature>
<feature type="modified residue" description="Phosphotyrosine; by ABL1" evidence="10">
    <location>
        <position position="219"/>
    </location>
</feature>
<feature type="modified residue" description="Phosphoserine" evidence="14">
    <location>
        <position position="224"/>
    </location>
</feature>
<feature type="modified residue" description="Phosphotyrosine; by ABL1" evidence="10">
    <location>
        <position position="265"/>
    </location>
</feature>
<feature type="modified residue" description="Phosphothreonine" evidence="11">
    <location>
        <position position="302"/>
    </location>
</feature>
<feature type="modified residue" description="Phosphotyrosine; by ABL1" evidence="10">
    <location>
        <position position="304"/>
    </location>
</feature>
<feature type="modified residue" description="Phosphoserine" evidence="14">
    <location>
        <position position="508"/>
    </location>
</feature>
<feature type="modified residue" description="Phosphotyrosine; by ITK" evidence="6">
    <location>
        <position position="525"/>
    </location>
</feature>
<feature type="cross-link" description="Glycyl lysine isopeptide (Lys-Gly) (interchain with G-Cter in ubiquitin)" evidence="11">
    <location>
        <position position="313"/>
    </location>
</feature>
<feature type="mutagenesis site" description="No loss in its ability to induce IFN-gamma. Significant reduction in its ability to induce IFN-gamma and reduced ability to promote addition of permissive chromatin-remodeling mark H3K4Me2 to the IFNG promoter region; when associated with A-76 and A-224." evidence="14">
    <original>S</original>
    <variation>A</variation>
    <location>
        <position position="52"/>
    </location>
</feature>
<feature type="mutagenesis site" description="No loss in its ability to induce IFN-gamma." evidence="14">
    <original>T</original>
    <variation>A</variation>
    <location>
        <position position="55"/>
    </location>
</feature>
<feature type="mutagenesis site" description="No loss in its ability to induce IFN-gamma. Significant reduction in its ability to induce IFN-gamma and reduced ability to promote addition of permissive chromatin-remodeling mark H3K4Me2 to the IFNG promoter region; when associated with A-52 and A-224." evidence="14">
    <original>Y</original>
    <variation>A</variation>
    <location>
        <position position="76"/>
    </location>
</feature>
<feature type="mutagenesis site" description="No loss in its ability to induce IFN-gamma." evidence="14">
    <original>Y</original>
    <variation>A</variation>
    <location>
        <position position="117"/>
    </location>
</feature>
<feature type="mutagenesis site" description="No effect on DNA-binding or its nuclear localization." evidence="11">
    <original>K</original>
    <variation>R</variation>
    <location>
        <position position="208"/>
    </location>
</feature>
<feature type="mutagenesis site" description="Significant loss of ABL1-mediated phosphorylation and loss of transcriptional activator activity; when associated with F-225 and F-304." evidence="10">
    <original>Y</original>
    <variation>F</variation>
    <location>
        <position position="219"/>
    </location>
</feature>
<feature type="mutagenesis site" description="No loss in its ability to induce IFN-gamma. Significant reduction in its ability to induce IFN-gamma and reduced ability to promote addition of permissive chromatin-remodeling mark H3K4Me2 to the IFNG promoter region; when associated with A-52 and A-76." evidence="14">
    <original>S</original>
    <variation>A</variation>
    <location>
        <position position="224"/>
    </location>
</feature>
<feature type="mutagenesis site" description="No loss of interaction with RUNX1." evidence="9">
    <original>Y</original>
    <variation>F</variation>
    <location>
        <position position="265"/>
    </location>
</feature>
<feature type="mutagenesis site" description="Significant loss of ABL1-mediated phosphorylation and loss of transcriptional activator activity; when associated with F-219 and F-304." evidence="10">
    <original>Y</original>
    <variation>F</variation>
    <location>
        <position position="265"/>
    </location>
</feature>
<feature type="mutagenesis site" description="Loss of phosphorylation and its ability to interact with NFATC2. Loss of its ability to suppress IL-2 and Th2 cytokine production. No loss of DNA-binding and no loss its ability to activate IFN-gamma transcription." evidence="11">
    <original>T</original>
    <variation>A</variation>
    <location>
        <position position="302"/>
    </location>
</feature>
<feature type="mutagenesis site" description="Loss of interaction with RUNX1 and loss of its ability to inhibit RUNX1 transcriptional activity and suppress TH17 lineage development. Significant loss of ABL1-mediated phosphorylation and loss of transcriptional activator activity; when associated with F-219 and F-225." evidence="9 10">
    <original>Y</original>
    <variation>F</variation>
    <location>
        <position position="304"/>
    </location>
</feature>
<feature type="mutagenesis site" description="No loss of phospshorylation." evidence="11">
    <original>T</original>
    <variation>A</variation>
    <location>
        <position position="310"/>
    </location>
</feature>
<feature type="mutagenesis site" description="Significant loss of ubiquitination. Loss of phosphorylation at T-302 causing loss of its ability to interact with NFATC2. Loss its ability to activate IFN-gamma transcription due to loss of DNA-binding activity. Loss of its ability to suppress IL-2 and Th2 cytokine production. Increased protein stability. Localization seen in both the nucleus and cytoplasm. No loss of interaction with GATA3 and RELA." evidence="11">
    <original>K</original>
    <variation>R</variation>
    <location>
        <position position="313"/>
    </location>
</feature>
<feature type="mutagenesis site" description="No effect on DNA-binding or its nuclear localization." evidence="11">
    <original>K</original>
    <variation>R</variation>
    <location>
        <position position="321"/>
    </location>
</feature>
<feature type="mutagenesis site" description="No loss of interaction with ITK and GATA3." evidence="6">
    <original>Y</original>
    <variation>F</variation>
    <location>
        <position position="437"/>
    </location>
</feature>
<feature type="mutagenesis site" description="No loss of interaction with RUNX1. No loss in its ability to induce IFN-gamma." evidence="9 14">
    <original>S</original>
    <variation>A</variation>
    <location>
        <position position="508"/>
    </location>
</feature>
<feature type="mutagenesis site" description="No loss of interaction with RUNX1. Loss of interaction with ITK and GATA3." evidence="6 9">
    <original>Y</original>
    <variation>F</variation>
    <location>
        <position position="525"/>
    </location>
</feature>
<feature type="sequence conflict" description="In Ref. 2; AAF00056." evidence="17" ref="2">
    <original>P</original>
    <variation>S</variation>
    <location>
        <position position="482"/>
    </location>
</feature>
<feature type="strand" evidence="18">
    <location>
        <begin position="138"/>
        <end position="142"/>
    </location>
</feature>
<feature type="helix" evidence="18">
    <location>
        <begin position="143"/>
        <end position="151"/>
    </location>
</feature>
<feature type="strand" evidence="18">
    <location>
        <begin position="155"/>
        <end position="157"/>
    </location>
</feature>
<feature type="strand" evidence="18">
    <location>
        <begin position="170"/>
        <end position="173"/>
    </location>
</feature>
<feature type="strand" evidence="18">
    <location>
        <begin position="180"/>
        <end position="193"/>
    </location>
</feature>
<feature type="strand" evidence="18">
    <location>
        <begin position="195"/>
        <end position="199"/>
    </location>
</feature>
<feature type="strand" evidence="18">
    <location>
        <begin position="202"/>
        <end position="207"/>
    </location>
</feature>
<feature type="strand" evidence="18">
    <location>
        <begin position="212"/>
        <end position="214"/>
    </location>
</feature>
<feature type="strand" evidence="18">
    <location>
        <begin position="218"/>
        <end position="220"/>
    </location>
</feature>
<feature type="strand" evidence="18">
    <location>
        <begin position="225"/>
        <end position="227"/>
    </location>
</feature>
<feature type="helix" evidence="18">
    <location>
        <begin position="228"/>
        <end position="233"/>
    </location>
</feature>
<feature type="strand" evidence="18">
    <location>
        <begin position="242"/>
        <end position="245"/>
    </location>
</feature>
<feature type="strand" evidence="18">
    <location>
        <begin position="250"/>
        <end position="253"/>
    </location>
</feature>
<feature type="strand" evidence="18">
    <location>
        <begin position="264"/>
        <end position="273"/>
    </location>
</feature>
<feature type="strand" evidence="18">
    <location>
        <begin position="279"/>
        <end position="281"/>
    </location>
</feature>
<feature type="strand" evidence="18">
    <location>
        <begin position="290"/>
        <end position="292"/>
    </location>
</feature>
<feature type="helix" evidence="18">
    <location>
        <begin position="294"/>
        <end position="296"/>
    </location>
</feature>
<feature type="strand" evidence="18">
    <location>
        <begin position="298"/>
        <end position="303"/>
    </location>
</feature>
<feature type="helix" evidence="18">
    <location>
        <begin position="307"/>
        <end position="316"/>
    </location>
</feature>
<feature type="helix" evidence="18">
    <location>
        <begin position="321"/>
        <end position="323"/>
    </location>
</feature>
<name>TBX21_MOUSE</name>
<accession>Q9JKD8</accession>
<accession>Q3U150</accession>
<accession>Q9R0A6</accession>
<comment type="function">
    <text evidence="4 6 7 8 9 10 11 12 13 15 16">Lineage-defining transcription factor which initiates Th1 lineage development from naive Th precursor cells both by activating Th1 genetic programs and by repressing the opposing Th2 and Th17 genetic programs. Activates transcription of a set of genes important for Th1 cell function, including those encoding IFN-gamma and the chemokine receptor CXCR3. Activates IFNG and CXCR3 genes in part by recruiting chromatin remodeling complexes including KDM6B, a SMARCA4-containing SWI/SNF-complex, and an H3K4me2-methyltransferase complex to their promoters and all of these complexes serve to establish a more permissive chromatin state conducive with transcriptional activation (PubMed:10761931, PubMed:17923685, PubMed:21095589). Can activate Th1 genes also via recruitment of Mediator complex and P-TEFb (composed of CDK9 and CCNT1/cyclin-T1) in the form of the super elongation complex (SEC) to super-enhancers and associated genes in activated Th1 cells (PubMed:27292648). Inhibits the Th17 cell lineage commitment by blocking RUNX1-mediated transactivation of Th17 cell-specific transcriptinal regulator RORC (PubMed:21151104). Inhibits the Th2 cell lineage commitment by suppressing the production of Th2 cytokines, such as IL-4, IL-5, and IL- 13, via repression of transcriptional regulators GATA3 and NFATC2 (PubMed:15662016, PubMed:21690296, PubMed:23616576). Protects Th1 cells from amplifying aberrant type-I IFN response in an IFN-gamma abundant microenvironment by acting as a repressor of type-I IFN transcription factors and type-I IFN- stimulated genes (PubMed:28623086). Acts as a regulator of antiviral B-cell responses; controls chronic viral infection by promoting the antiviral antibody IgG2a isotype switching and via regulation of a broad antiviral gene expression program (PubMed:27430722).</text>
</comment>
<comment type="subunit">
    <text evidence="1 6 8 9 10 11 12">Interacts with RUNX1 and RUNX3 (PubMed:21151104). Interacts with ITK (PubMed:15662016). The phosphorylated form (at Tyr-525) interacts with GATA3 (PubMed:15662016, PubMed:21690296, PubMed:23616576). Interacts with ABL1 (PubMed:21690296). Interacts with RELA (PubMed:23616576). The phosphorylated form (at Thr-302) interacts with NFATC2 (PubMed:23616576). Interacts with KDM6B (PubMed:21095589). Interacts with SMARCA4 in a KDM6B-dependent manner (PubMed:21095589). Interacts with CCTN1 and CDK9 (PubMed:27292648). Interacts with USP10 (By similarity).</text>
</comment>
<comment type="interaction">
    <interactant intactId="EBI-3863870">
        <id>Q9JKD8</id>
    </interactant>
    <interactant intactId="EBI-6253762">
        <id>P41183</id>
        <label>Bcl6</label>
    </interactant>
    <organismsDiffer>false</organismsDiffer>
    <experiments>3</experiments>
</comment>
<comment type="interaction">
    <interactant intactId="EBI-3863870">
        <id>Q9JKD8</id>
    </interactant>
    <interactant intactId="EBI-3863873">
        <id>Q03347</id>
        <label>Runx1</label>
    </interactant>
    <organismsDiffer>false</organismsDiffer>
    <experiments>3</experiments>
</comment>
<comment type="subcellular location">
    <subcellularLocation>
        <location evidence="4 6 10 11">Nucleus</location>
    </subcellularLocation>
</comment>
<comment type="tissue specificity">
    <text evidence="4 5 15">T-cell specific (PubMed:10761931, PubMed:11087660). Expressed in regulatory T (TReg) cells (PubMed:28607488).</text>
</comment>
<comment type="induction">
    <text evidence="6">Induced during early Th1 cell differentiation, gradually decreasing at later stages.</text>
</comment>
<comment type="PTM">
    <text evidence="6 10 11 14">Phosphorylations at Ser-52, Tyr-76, Ser-224 and Ser-508 are regulated by mTORC1 (PubMed:28424242). Phosphorylation at Tyr-525 is essential for its interaction GATA3 (PubMed:15662016). Phosphorylation at Tyr-219, Tyr-265 and Tyr-304 enhances its transcriptional activator activity (PubMed:21690296). Phosphorylation at Thr-302 is required for its interaction with NFATC2 (PubMed:23616576).</text>
</comment>
<comment type="PTM">
    <text evidence="1 11">Ubiquitinated at Lys-313, leading to its degradation by the proteasome. Ubiquitination is essential for controlling protein stability, binding to the T-box-binding element of the IFN-gamma promoter, and for interaction with NFATC2 through induction of phosphorylation at Thr-302 (PubMed:23616576). Deubiquitinated by USP10 leading to its stabilization (By similarity).</text>
</comment>
<organism>
    <name type="scientific">Mus musculus</name>
    <name type="common">Mouse</name>
    <dbReference type="NCBI Taxonomy" id="10090"/>
    <lineage>
        <taxon>Eukaryota</taxon>
        <taxon>Metazoa</taxon>
        <taxon>Chordata</taxon>
        <taxon>Craniata</taxon>
        <taxon>Vertebrata</taxon>
        <taxon>Euteleostomi</taxon>
        <taxon>Mammalia</taxon>
        <taxon>Eutheria</taxon>
        <taxon>Euarchontoglires</taxon>
        <taxon>Glires</taxon>
        <taxon>Rodentia</taxon>
        <taxon>Myomorpha</taxon>
        <taxon>Muroidea</taxon>
        <taxon>Muridae</taxon>
        <taxon>Murinae</taxon>
        <taxon>Mus</taxon>
        <taxon>Mus</taxon>
    </lineage>
</organism>
<reference key="1">
    <citation type="journal article" date="2000" name="Cell">
        <title>A novel transcription factor, T-bet, directs Th1 lineage commitment.</title>
        <authorList>
            <person name="Szabo S.J."/>
            <person name="Kim S.T."/>
            <person name="Costa G.L."/>
            <person name="Zhang X."/>
            <person name="Fathman C.G."/>
            <person name="Glimcher L.H."/>
        </authorList>
    </citation>
    <scope>NUCLEOTIDE SEQUENCE [MRNA]</scope>
    <scope>FUNCTION</scope>
    <scope>SUBCELLULAR LOCATION</scope>
    <scope>TISSUE SPECIFICITY</scope>
</reference>
<reference key="2">
    <citation type="journal article" date="2000" name="Genomics">
        <title>Cloning and characterization of a new member of the T-box gene family.</title>
        <authorList>
            <person name="Zhang W.X."/>
            <person name="Yang S.Y."/>
        </authorList>
    </citation>
    <scope>NUCLEOTIDE SEQUENCE [MRNA]</scope>
    <scope>TISSUE SPECIFICITY</scope>
    <source>
        <strain>BALB/cJ</strain>
    </source>
</reference>
<reference key="3">
    <citation type="journal article" date="2005" name="Science">
        <title>The transcriptional landscape of the mammalian genome.</title>
        <authorList>
            <person name="Carninci P."/>
            <person name="Kasukawa T."/>
            <person name="Katayama S."/>
            <person name="Gough J."/>
            <person name="Frith M.C."/>
            <person name="Maeda N."/>
            <person name="Oyama R."/>
            <person name="Ravasi T."/>
            <person name="Lenhard B."/>
            <person name="Wells C."/>
            <person name="Kodzius R."/>
            <person name="Shimokawa K."/>
            <person name="Bajic V.B."/>
            <person name="Brenner S.E."/>
            <person name="Batalov S."/>
            <person name="Forrest A.R."/>
            <person name="Zavolan M."/>
            <person name="Davis M.J."/>
            <person name="Wilming L.G."/>
            <person name="Aidinis V."/>
            <person name="Allen J.E."/>
            <person name="Ambesi-Impiombato A."/>
            <person name="Apweiler R."/>
            <person name="Aturaliya R.N."/>
            <person name="Bailey T.L."/>
            <person name="Bansal M."/>
            <person name="Baxter L."/>
            <person name="Beisel K.W."/>
            <person name="Bersano T."/>
            <person name="Bono H."/>
            <person name="Chalk A.M."/>
            <person name="Chiu K.P."/>
            <person name="Choudhary V."/>
            <person name="Christoffels A."/>
            <person name="Clutterbuck D.R."/>
            <person name="Crowe M.L."/>
            <person name="Dalla E."/>
            <person name="Dalrymple B.P."/>
            <person name="de Bono B."/>
            <person name="Della Gatta G."/>
            <person name="di Bernardo D."/>
            <person name="Down T."/>
            <person name="Engstrom P."/>
            <person name="Fagiolini M."/>
            <person name="Faulkner G."/>
            <person name="Fletcher C.F."/>
            <person name="Fukushima T."/>
            <person name="Furuno M."/>
            <person name="Futaki S."/>
            <person name="Gariboldi M."/>
            <person name="Georgii-Hemming P."/>
            <person name="Gingeras T.R."/>
            <person name="Gojobori T."/>
            <person name="Green R.E."/>
            <person name="Gustincich S."/>
            <person name="Harbers M."/>
            <person name="Hayashi Y."/>
            <person name="Hensch T.K."/>
            <person name="Hirokawa N."/>
            <person name="Hill D."/>
            <person name="Huminiecki L."/>
            <person name="Iacono M."/>
            <person name="Ikeo K."/>
            <person name="Iwama A."/>
            <person name="Ishikawa T."/>
            <person name="Jakt M."/>
            <person name="Kanapin A."/>
            <person name="Katoh M."/>
            <person name="Kawasawa Y."/>
            <person name="Kelso J."/>
            <person name="Kitamura H."/>
            <person name="Kitano H."/>
            <person name="Kollias G."/>
            <person name="Krishnan S.P."/>
            <person name="Kruger A."/>
            <person name="Kummerfeld S.K."/>
            <person name="Kurochkin I.V."/>
            <person name="Lareau L.F."/>
            <person name="Lazarevic D."/>
            <person name="Lipovich L."/>
            <person name="Liu J."/>
            <person name="Liuni S."/>
            <person name="McWilliam S."/>
            <person name="Madan Babu M."/>
            <person name="Madera M."/>
            <person name="Marchionni L."/>
            <person name="Matsuda H."/>
            <person name="Matsuzawa S."/>
            <person name="Miki H."/>
            <person name="Mignone F."/>
            <person name="Miyake S."/>
            <person name="Morris K."/>
            <person name="Mottagui-Tabar S."/>
            <person name="Mulder N."/>
            <person name="Nakano N."/>
            <person name="Nakauchi H."/>
            <person name="Ng P."/>
            <person name="Nilsson R."/>
            <person name="Nishiguchi S."/>
            <person name="Nishikawa S."/>
            <person name="Nori F."/>
            <person name="Ohara O."/>
            <person name="Okazaki Y."/>
            <person name="Orlando V."/>
            <person name="Pang K.C."/>
            <person name="Pavan W.J."/>
            <person name="Pavesi G."/>
            <person name="Pesole G."/>
            <person name="Petrovsky N."/>
            <person name="Piazza S."/>
            <person name="Reed J."/>
            <person name="Reid J.F."/>
            <person name="Ring B.Z."/>
            <person name="Ringwald M."/>
            <person name="Rost B."/>
            <person name="Ruan Y."/>
            <person name="Salzberg S.L."/>
            <person name="Sandelin A."/>
            <person name="Schneider C."/>
            <person name="Schoenbach C."/>
            <person name="Sekiguchi K."/>
            <person name="Semple C.A."/>
            <person name="Seno S."/>
            <person name="Sessa L."/>
            <person name="Sheng Y."/>
            <person name="Shibata Y."/>
            <person name="Shimada H."/>
            <person name="Shimada K."/>
            <person name="Silva D."/>
            <person name="Sinclair B."/>
            <person name="Sperling S."/>
            <person name="Stupka E."/>
            <person name="Sugiura K."/>
            <person name="Sultana R."/>
            <person name="Takenaka Y."/>
            <person name="Taki K."/>
            <person name="Tammoja K."/>
            <person name="Tan S.L."/>
            <person name="Tang S."/>
            <person name="Taylor M.S."/>
            <person name="Tegner J."/>
            <person name="Teichmann S.A."/>
            <person name="Ueda H.R."/>
            <person name="van Nimwegen E."/>
            <person name="Verardo R."/>
            <person name="Wei C.L."/>
            <person name="Yagi K."/>
            <person name="Yamanishi H."/>
            <person name="Zabarovsky E."/>
            <person name="Zhu S."/>
            <person name="Zimmer A."/>
            <person name="Hide W."/>
            <person name="Bult C."/>
            <person name="Grimmond S.M."/>
            <person name="Teasdale R.D."/>
            <person name="Liu E.T."/>
            <person name="Brusic V."/>
            <person name="Quackenbush J."/>
            <person name="Wahlestedt C."/>
            <person name="Mattick J.S."/>
            <person name="Hume D.A."/>
            <person name="Kai C."/>
            <person name="Sasaki D."/>
            <person name="Tomaru Y."/>
            <person name="Fukuda S."/>
            <person name="Kanamori-Katayama M."/>
            <person name="Suzuki M."/>
            <person name="Aoki J."/>
            <person name="Arakawa T."/>
            <person name="Iida J."/>
            <person name="Imamura K."/>
            <person name="Itoh M."/>
            <person name="Kato T."/>
            <person name="Kawaji H."/>
            <person name="Kawagashira N."/>
            <person name="Kawashima T."/>
            <person name="Kojima M."/>
            <person name="Kondo S."/>
            <person name="Konno H."/>
            <person name="Nakano K."/>
            <person name="Ninomiya N."/>
            <person name="Nishio T."/>
            <person name="Okada M."/>
            <person name="Plessy C."/>
            <person name="Shibata K."/>
            <person name="Shiraki T."/>
            <person name="Suzuki S."/>
            <person name="Tagami M."/>
            <person name="Waki K."/>
            <person name="Watahiki A."/>
            <person name="Okamura-Oho Y."/>
            <person name="Suzuki H."/>
            <person name="Kawai J."/>
            <person name="Hayashizaki Y."/>
        </authorList>
    </citation>
    <scope>NUCLEOTIDE SEQUENCE [LARGE SCALE MRNA]</scope>
    <source>
        <strain>NOD</strain>
        <tissue>Spleen</tissue>
    </source>
</reference>
<reference key="4">
    <citation type="submission" date="2005-07" db="EMBL/GenBank/DDBJ databases">
        <authorList>
            <person name="Mural R.J."/>
            <person name="Adams M.D."/>
            <person name="Myers E.W."/>
            <person name="Smith H.O."/>
            <person name="Venter J.C."/>
        </authorList>
    </citation>
    <scope>NUCLEOTIDE SEQUENCE [LARGE SCALE GENOMIC DNA]</scope>
</reference>
<reference key="5">
    <citation type="journal article" date="2004" name="Genome Res.">
        <title>The status, quality, and expansion of the NIH full-length cDNA project: the Mammalian Gene Collection (MGC).</title>
        <authorList>
            <consortium name="The MGC Project Team"/>
        </authorList>
    </citation>
    <scope>NUCLEOTIDE SEQUENCE [LARGE SCALE MRNA]</scope>
    <source>
        <tissue>Brain</tissue>
    </source>
</reference>
<reference key="6">
    <citation type="journal article" date="2005" name="Science">
        <title>T helper cell fate specified by kinase-mediated interaction of T-bet with GATA-3.</title>
        <authorList>
            <person name="Hwang E.S."/>
            <person name="Szabo S.J."/>
            <person name="Schwartzberg P.L."/>
            <person name="Glimcher L.H."/>
        </authorList>
    </citation>
    <scope>FUNCTION</scope>
    <scope>INTERACTION WITH GATA3 AND ITK</scope>
    <scope>INDUCTION</scope>
    <scope>SUBCELLULAR LOCATION</scope>
    <scope>PHOSPHORYLATION AT TYR-525</scope>
    <scope>MUTAGENESIS OF TYR-437 AND TYR-525</scope>
</reference>
<reference key="7">
    <citation type="journal article" date="2007" name="Mol. Cell. Biol.">
        <title>T-bet's ability to regulate individual target genes requires the conserved T-box domain to recruit histone methyltransferase activity and a separate family member-specific transactivation domain.</title>
        <authorList>
            <person name="Lewis M.D."/>
            <person name="Miller S.A."/>
            <person name="Miazgowicz M.M."/>
            <person name="Beima K.M."/>
            <person name="Weinmann A.S."/>
        </authorList>
    </citation>
    <scope>FUNCTION</scope>
</reference>
<reference key="8">
    <citation type="journal article" date="2010" name="Mol. Cell">
        <title>Jmjd3 and UTX play a demethylase-independent role in chromatin remodeling to regulate T-box family member-dependent gene expression.</title>
        <authorList>
            <person name="Miller S.A."/>
            <person name="Mohn S.E."/>
            <person name="Weinmann A.S."/>
        </authorList>
    </citation>
    <scope>FUNCTION</scope>
    <scope>INTERACTION WITH KDM6B AND SMARCA4</scope>
</reference>
<reference key="9">
    <citation type="journal article" date="2011" name="Mol. Cell. Biol.">
        <title>c-Abl-mediated tyrosine phosphorylation of the T-bet DNA-binding domain regulates CD4+ T-cell differentiation and allergic lung inflammation.</title>
        <authorList>
            <person name="Chen A."/>
            <person name="Lee S.M."/>
            <person name="Gao B."/>
            <person name="Shannon S."/>
            <person name="Zhu Z."/>
            <person name="Fang D."/>
        </authorList>
    </citation>
    <scope>FUNCTION</scope>
    <scope>SUBCELLULAR LOCATION</scope>
    <scope>INTERACTION WITH ABL1 AND GATA3</scope>
    <scope>PHOSPHORYLATION AT TYR-219; TYR-265 AND TYR-304</scope>
    <scope>MUTAGENESIS OF TYR-219; TYR-265 AND TYR-304</scope>
</reference>
<reference key="10">
    <citation type="journal article" date="2011" name="Nat. Immunol.">
        <title>T-bet represses T(H)17 differentiation by preventing Runx1-mediated activation of the gene encoding RORgammat.</title>
        <authorList>
            <person name="Lazarevic V."/>
            <person name="Chen X."/>
            <person name="Shim J.H."/>
            <person name="Hwang E.S."/>
            <person name="Jang E."/>
            <person name="Bolm A.N."/>
            <person name="Oukka M."/>
            <person name="Kuchroo V.K."/>
            <person name="Glimcher L.H."/>
        </authorList>
    </citation>
    <scope>FUNCTION</scope>
    <scope>INTERACTION WITH RUNX1 AND RUNX3</scope>
    <scope>MUTAGENESIS OF TYR-265; TYR-304; SER-508 AND TYR-525</scope>
    <scope>SITE</scope>
</reference>
<reference key="11">
    <citation type="journal article" date="2013" name="J. Immunol.">
        <title>Lysine 313 of T-box is crucial for modulation of protein stability, DNA binding, and threonine phosphorylation of T-bet.</title>
        <authorList>
            <person name="Jang E.J."/>
            <person name="Park H.R."/>
            <person name="Hong J.H."/>
            <person name="Hwang E.S."/>
        </authorList>
    </citation>
    <scope>FUNCTION</scope>
    <scope>UBIQUITINATION AT LYS-313</scope>
    <scope>MUTAGENESIS OF LYS-208; THR-302; THR-310; LYS-313 AND LYS-321</scope>
    <scope>PHOSPHORYLATION AT THR-302</scope>
    <scope>SUBCELLULAR LOCATION</scope>
    <scope>INTERACTION WITH GATA3; RELA AND NFATC2</scope>
</reference>
<reference key="12">
    <citation type="journal article" date="2016" name="Cell Rep.">
        <title>T-bet activates Th1 genes through mediator and the super elongation complex.</title>
        <authorList>
            <person name="Hertweck A."/>
            <person name="Evans C.M."/>
            <person name="Eskandarpour M."/>
            <person name="Lau J.C."/>
            <person name="Oleinika K."/>
            <person name="Jackson I."/>
            <person name="Kelly A."/>
            <person name="Ambrose J."/>
            <person name="Adamson P."/>
            <person name="Cousins D.J."/>
            <person name="Lavender P."/>
            <person name="Calder V.L."/>
            <person name="Lord G.M."/>
            <person name="Jenner R.G."/>
        </authorList>
    </citation>
    <scope>FUNCTION</scope>
    <scope>INTERACTION WITH CCNT1 AND CDK9</scope>
</reference>
<reference key="13">
    <citation type="journal article" date="2016" name="J. Immunol.">
        <title>Cutting Edge: B cell-intrinsic T-bet expression is required to control chronic viral infection.</title>
        <authorList>
            <person name="Barnett B.E."/>
            <person name="Staupe R.P."/>
            <person name="Odorizzi P.M."/>
            <person name="Palko O."/>
            <person name="Tomov V.T."/>
            <person name="Mahan A.E."/>
            <person name="Gunn B."/>
            <person name="Chen D."/>
            <person name="Paley M.A."/>
            <person name="Alter G."/>
            <person name="Reiner S.L."/>
            <person name="Lauer G.M."/>
            <person name="Teijaro J.R."/>
            <person name="Wherry E.J."/>
        </authorList>
    </citation>
    <scope>FUNCTION</scope>
</reference>
<reference key="14">
    <citation type="journal article" date="2017" name="Immunity">
        <title>The transcription factor T-bet limits amplification of Type I IFN transcriptome and circuitry in T helper 1 cells.</title>
        <authorList>
            <person name="Iwata S."/>
            <person name="Mikami Y."/>
            <person name="Sun H.W."/>
            <person name="Brooks S.R."/>
            <person name="Jankovic D."/>
            <person name="Hirahara K."/>
            <person name="Onodera A."/>
            <person name="Shih H.Y."/>
            <person name="Kawabe T."/>
            <person name="Jiang K."/>
            <person name="Nakayama T."/>
            <person name="Sher A."/>
            <person name="O'Shea J.J."/>
            <person name="Davis F.P."/>
            <person name="Kanno Y."/>
        </authorList>
    </citation>
    <scope>FUNCTION</scope>
</reference>
<reference key="15">
    <citation type="journal article" date="2017" name="J. Immunol.">
        <title>mTORC1 Promotes T-bet phosphorylation to regulate Th1 differentiation.</title>
        <authorList>
            <person name="Chornoguz O."/>
            <person name="Hagan R.S."/>
            <person name="Haile A."/>
            <person name="Arwood M.L."/>
            <person name="Gamper C.J."/>
            <person name="Banerjee A."/>
            <person name="Powell J.D."/>
        </authorList>
    </citation>
    <scope>PHOSPHORYLATION AT SER-52; THR-55; TYR-76; TYR-117; SER-224 AND SER-508</scope>
    <scope>MUTAGENESIS OF SER-52; THR-55; TYR-76; TYR-117; SER-224 AND SER-508</scope>
</reference>
<reference key="16">
    <citation type="journal article" date="2017" name="Nature">
        <title>Stability and function of regulatory T cells expressing the transcription factor T-bet.</title>
        <authorList>
            <person name="Levine A.G."/>
            <person name="Medoza A."/>
            <person name="Hemmers S."/>
            <person name="Moltedo B."/>
            <person name="Niec R.E."/>
            <person name="Schizas M."/>
            <person name="Hoyos B.E."/>
            <person name="Putintseva E.V."/>
            <person name="Chaudhry A."/>
            <person name="Dikiy S."/>
            <person name="Fujisawa S."/>
            <person name="Chudakov D.M."/>
            <person name="Treuting P.M."/>
            <person name="Rudensky A.Y."/>
        </authorList>
    </citation>
    <scope>FUNCTION</scope>
    <scope>TISSUE SPECIFICITY</scope>
</reference>
<evidence type="ECO:0000250" key="1">
    <source>
        <dbReference type="UniProtKB" id="Q9UL17"/>
    </source>
</evidence>
<evidence type="ECO:0000255" key="2">
    <source>
        <dbReference type="PROSITE-ProRule" id="PRU00201"/>
    </source>
</evidence>
<evidence type="ECO:0000256" key="3">
    <source>
        <dbReference type="SAM" id="MobiDB-lite"/>
    </source>
</evidence>
<evidence type="ECO:0000269" key="4">
    <source>
    </source>
</evidence>
<evidence type="ECO:0000269" key="5">
    <source>
    </source>
</evidence>
<evidence type="ECO:0000269" key="6">
    <source>
    </source>
</evidence>
<evidence type="ECO:0000269" key="7">
    <source>
    </source>
</evidence>
<evidence type="ECO:0000269" key="8">
    <source>
    </source>
</evidence>
<evidence type="ECO:0000269" key="9">
    <source>
    </source>
</evidence>
<evidence type="ECO:0000269" key="10">
    <source>
    </source>
</evidence>
<evidence type="ECO:0000269" key="11">
    <source>
    </source>
</evidence>
<evidence type="ECO:0000269" key="12">
    <source>
    </source>
</evidence>
<evidence type="ECO:0000269" key="13">
    <source>
    </source>
</evidence>
<evidence type="ECO:0000269" key="14">
    <source>
    </source>
</evidence>
<evidence type="ECO:0000269" key="15">
    <source>
    </source>
</evidence>
<evidence type="ECO:0000269" key="16">
    <source>
    </source>
</evidence>
<evidence type="ECO:0000305" key="17"/>
<evidence type="ECO:0007829" key="18">
    <source>
        <dbReference type="PDB" id="5T1J"/>
    </source>
</evidence>
<keyword id="KW-0002">3D-structure</keyword>
<keyword id="KW-0010">Activator</keyword>
<keyword id="KW-0238">DNA-binding</keyword>
<keyword id="KW-1017">Isopeptide bond</keyword>
<keyword id="KW-0539">Nucleus</keyword>
<keyword id="KW-0597">Phosphoprotein</keyword>
<keyword id="KW-1185">Reference proteome</keyword>
<keyword id="KW-0678">Repressor</keyword>
<keyword id="KW-0804">Transcription</keyword>
<keyword id="KW-0805">Transcription regulation</keyword>
<keyword id="KW-0832">Ubl conjugation</keyword>
<dbReference type="EMBL" id="AF241242">
    <property type="protein sequence ID" value="AAF61242.1"/>
    <property type="molecule type" value="mRNA"/>
</dbReference>
<dbReference type="EMBL" id="AF093099">
    <property type="protein sequence ID" value="AAF00056.1"/>
    <property type="molecule type" value="mRNA"/>
</dbReference>
<dbReference type="EMBL" id="AK156271">
    <property type="protein sequence ID" value="BAE33650.1"/>
    <property type="molecule type" value="mRNA"/>
</dbReference>
<dbReference type="EMBL" id="CH466556">
    <property type="protein sequence ID" value="EDL16071.1"/>
    <property type="molecule type" value="Genomic_DNA"/>
</dbReference>
<dbReference type="EMBL" id="BC137986">
    <property type="protein sequence ID" value="AAI37987.1"/>
    <property type="molecule type" value="mRNA"/>
</dbReference>
<dbReference type="EMBL" id="BC137988">
    <property type="protein sequence ID" value="AAI37989.1"/>
    <property type="molecule type" value="mRNA"/>
</dbReference>
<dbReference type="CCDS" id="CCDS25315.1"/>
<dbReference type="RefSeq" id="NP_062380.2">
    <property type="nucleotide sequence ID" value="NM_019507.2"/>
</dbReference>
<dbReference type="PDB" id="5T1J">
    <property type="method" value="X-ray"/>
    <property type="resolution" value="2.95 A"/>
    <property type="chains" value="A/B=135-326"/>
</dbReference>
<dbReference type="PDBsum" id="5T1J"/>
<dbReference type="SMR" id="Q9JKD8"/>
<dbReference type="BioGRID" id="208321">
    <property type="interactions" value="9"/>
</dbReference>
<dbReference type="FunCoup" id="Q9JKD8">
    <property type="interactions" value="82"/>
</dbReference>
<dbReference type="IntAct" id="Q9JKD8">
    <property type="interactions" value="9"/>
</dbReference>
<dbReference type="STRING" id="10090.ENSMUSP00000001484"/>
<dbReference type="GlyGen" id="Q9JKD8">
    <property type="glycosylation" value="1 site"/>
</dbReference>
<dbReference type="iPTMnet" id="Q9JKD8"/>
<dbReference type="PhosphoSitePlus" id="Q9JKD8"/>
<dbReference type="PaxDb" id="10090-ENSMUSP00000001484"/>
<dbReference type="ProteomicsDB" id="254670"/>
<dbReference type="Antibodypedia" id="4021">
    <property type="antibodies" value="702 antibodies from 44 providers"/>
</dbReference>
<dbReference type="DNASU" id="57765"/>
<dbReference type="Ensembl" id="ENSMUST00000001484.3">
    <property type="protein sequence ID" value="ENSMUSP00000001484.3"/>
    <property type="gene ID" value="ENSMUSG00000001444.3"/>
</dbReference>
<dbReference type="GeneID" id="57765"/>
<dbReference type="KEGG" id="mmu:57765"/>
<dbReference type="UCSC" id="uc007ldr.2">
    <property type="organism name" value="mouse"/>
</dbReference>
<dbReference type="AGR" id="MGI:1888984"/>
<dbReference type="CTD" id="30009"/>
<dbReference type="MGI" id="MGI:1888984">
    <property type="gene designation" value="Tbx21"/>
</dbReference>
<dbReference type="VEuPathDB" id="HostDB:ENSMUSG00000001444"/>
<dbReference type="eggNOG" id="KOG3585">
    <property type="taxonomic scope" value="Eukaryota"/>
</dbReference>
<dbReference type="GeneTree" id="ENSGT00940000160397"/>
<dbReference type="HOGENOM" id="CLU_014430_8_2_1"/>
<dbReference type="InParanoid" id="Q9JKD8"/>
<dbReference type="OMA" id="AGWPMAP"/>
<dbReference type="OrthoDB" id="7442607at2759"/>
<dbReference type="PhylomeDB" id="Q9JKD8"/>
<dbReference type="TreeFam" id="TF106341"/>
<dbReference type="BioGRID-ORCS" id="57765">
    <property type="hits" value="5 hits in 115 CRISPR screens"/>
</dbReference>
<dbReference type="ChiTaRS" id="Tbx21">
    <property type="organism name" value="mouse"/>
</dbReference>
<dbReference type="PRO" id="PR:Q9JKD8"/>
<dbReference type="Proteomes" id="UP000000589">
    <property type="component" value="Chromosome 11"/>
</dbReference>
<dbReference type="RNAct" id="Q9JKD8">
    <property type="molecule type" value="protein"/>
</dbReference>
<dbReference type="Bgee" id="ENSMUSG00000001444">
    <property type="expression patterns" value="Expressed in ureteric bud trunk and 60 other cell types or tissues"/>
</dbReference>
<dbReference type="GO" id="GO:0043025">
    <property type="term" value="C:neuronal cell body"/>
    <property type="evidence" value="ECO:0000314"/>
    <property type="project" value="MGI"/>
</dbReference>
<dbReference type="GO" id="GO:0005634">
    <property type="term" value="C:nucleus"/>
    <property type="evidence" value="ECO:0000314"/>
    <property type="project" value="UniProtKB"/>
</dbReference>
<dbReference type="GO" id="GO:0003677">
    <property type="term" value="F:DNA binding"/>
    <property type="evidence" value="ECO:0000315"/>
    <property type="project" value="UniProtKB"/>
</dbReference>
<dbReference type="GO" id="GO:0001228">
    <property type="term" value="F:DNA-binding transcription activator activity, RNA polymerase II-specific"/>
    <property type="evidence" value="ECO:0000314"/>
    <property type="project" value="UniProtKB"/>
</dbReference>
<dbReference type="GO" id="GO:0001227">
    <property type="term" value="F:DNA-binding transcription repressor activity, RNA polymerase II-specific"/>
    <property type="evidence" value="ECO:0007669"/>
    <property type="project" value="Ensembl"/>
</dbReference>
<dbReference type="GO" id="GO:0000978">
    <property type="term" value="F:RNA polymerase II cis-regulatory region sequence-specific DNA binding"/>
    <property type="evidence" value="ECO:0007669"/>
    <property type="project" value="InterPro"/>
</dbReference>
<dbReference type="GO" id="GO:0072676">
    <property type="term" value="P:lymphocyte migration"/>
    <property type="evidence" value="ECO:0000315"/>
    <property type="project" value="UniProtKB"/>
</dbReference>
<dbReference type="GO" id="GO:0045892">
    <property type="term" value="P:negative regulation of DNA-templated transcription"/>
    <property type="evidence" value="ECO:0000315"/>
    <property type="project" value="UniProtKB"/>
</dbReference>
<dbReference type="GO" id="GO:0032703">
    <property type="term" value="P:negative regulation of interleukin-2 production"/>
    <property type="evidence" value="ECO:0000315"/>
    <property type="project" value="UniProtKB"/>
</dbReference>
<dbReference type="GO" id="GO:2000320">
    <property type="term" value="P:negative regulation of T-helper 17 cell differentiation"/>
    <property type="evidence" value="ECO:0000314"/>
    <property type="project" value="UniProtKB"/>
</dbReference>
<dbReference type="GO" id="GO:2000329">
    <property type="term" value="P:negative regulation of T-helper 17 cell lineage commitment"/>
    <property type="evidence" value="ECO:0000315"/>
    <property type="project" value="UniProtKB"/>
</dbReference>
<dbReference type="GO" id="GO:2000552">
    <property type="term" value="P:negative regulation of T-helper 2 cell cytokine production"/>
    <property type="evidence" value="ECO:0000314"/>
    <property type="project" value="UniProtKB"/>
</dbReference>
<dbReference type="GO" id="GO:0045893">
    <property type="term" value="P:positive regulation of DNA-templated transcription"/>
    <property type="evidence" value="ECO:0000314"/>
    <property type="project" value="UniProtKB"/>
</dbReference>
<dbReference type="GO" id="GO:0010628">
    <property type="term" value="P:positive regulation of gene expression"/>
    <property type="evidence" value="ECO:0000316"/>
    <property type="project" value="MGI"/>
</dbReference>
<dbReference type="GO" id="GO:0048304">
    <property type="term" value="P:positive regulation of isotype switching to IgG isotypes"/>
    <property type="evidence" value="ECO:0000315"/>
    <property type="project" value="MGI"/>
</dbReference>
<dbReference type="GO" id="GO:2000556">
    <property type="term" value="P:positive regulation of T-helper 1 cell cytokine production"/>
    <property type="evidence" value="ECO:0000314"/>
    <property type="project" value="UniProtKB"/>
</dbReference>
<dbReference type="GO" id="GO:0045944">
    <property type="term" value="P:positive regulation of transcription by RNA polymerase II"/>
    <property type="evidence" value="ECO:0000314"/>
    <property type="project" value="UniProtKB"/>
</dbReference>
<dbReference type="GO" id="GO:0043161">
    <property type="term" value="P:proteasome-mediated ubiquitin-dependent protein catabolic process"/>
    <property type="evidence" value="ECO:0000315"/>
    <property type="project" value="UniProtKB"/>
</dbReference>
<dbReference type="GO" id="GO:0050776">
    <property type="term" value="P:regulation of immune response"/>
    <property type="evidence" value="ECO:0000315"/>
    <property type="project" value="MGI"/>
</dbReference>
<dbReference type="GO" id="GO:0045580">
    <property type="term" value="P:regulation of T cell differentiation"/>
    <property type="evidence" value="ECO:0000315"/>
    <property type="project" value="UniProtKB"/>
</dbReference>
<dbReference type="GO" id="GO:0009615">
    <property type="term" value="P:response to virus"/>
    <property type="evidence" value="ECO:0007669"/>
    <property type="project" value="Ensembl"/>
</dbReference>
<dbReference type="GO" id="GO:0030217">
    <property type="term" value="P:T cell differentiation"/>
    <property type="evidence" value="ECO:0000315"/>
    <property type="project" value="MGI"/>
</dbReference>
<dbReference type="GO" id="GO:0002296">
    <property type="term" value="P:T-helper 1 cell lineage commitment"/>
    <property type="evidence" value="ECO:0000314"/>
    <property type="project" value="UniProtKB"/>
</dbReference>
<dbReference type="CDD" id="cd20203">
    <property type="entry name" value="T-box_TBX21"/>
    <property type="match status" value="1"/>
</dbReference>
<dbReference type="FunFam" id="2.60.40.820:FF:000011">
    <property type="entry name" value="T-box transcription factor TBX21"/>
    <property type="match status" value="1"/>
</dbReference>
<dbReference type="Gene3D" id="2.60.40.820">
    <property type="entry name" value="Transcription factor, T-box"/>
    <property type="match status" value="1"/>
</dbReference>
<dbReference type="InterPro" id="IPR008967">
    <property type="entry name" value="p53-like_TF_DNA-bd_sf"/>
</dbReference>
<dbReference type="InterPro" id="IPR046360">
    <property type="entry name" value="T-box_DNA-bd"/>
</dbReference>
<dbReference type="InterPro" id="IPR036960">
    <property type="entry name" value="T-box_sf"/>
</dbReference>
<dbReference type="InterPro" id="IPR001699">
    <property type="entry name" value="TF_T-box"/>
</dbReference>
<dbReference type="InterPro" id="IPR018186">
    <property type="entry name" value="TF_T-box_CS"/>
</dbReference>
<dbReference type="PANTHER" id="PTHR11267">
    <property type="entry name" value="T-BOX PROTEIN-RELATED"/>
    <property type="match status" value="1"/>
</dbReference>
<dbReference type="PANTHER" id="PTHR11267:SF125">
    <property type="entry name" value="T-BOX TRANSCRIPTION FACTOR TBX21"/>
    <property type="match status" value="1"/>
</dbReference>
<dbReference type="Pfam" id="PF00907">
    <property type="entry name" value="T-box"/>
    <property type="match status" value="1"/>
</dbReference>
<dbReference type="PRINTS" id="PR00937">
    <property type="entry name" value="TBOX"/>
</dbReference>
<dbReference type="SMART" id="SM00425">
    <property type="entry name" value="TBOX"/>
    <property type="match status" value="1"/>
</dbReference>
<dbReference type="SUPFAM" id="SSF49417">
    <property type="entry name" value="p53-like transcription factors"/>
    <property type="match status" value="1"/>
</dbReference>
<dbReference type="PROSITE" id="PS01283">
    <property type="entry name" value="TBOX_1"/>
    <property type="match status" value="1"/>
</dbReference>
<dbReference type="PROSITE" id="PS01264">
    <property type="entry name" value="TBOX_2"/>
    <property type="match status" value="1"/>
</dbReference>
<dbReference type="PROSITE" id="PS50252">
    <property type="entry name" value="TBOX_3"/>
    <property type="match status" value="1"/>
</dbReference>
<proteinExistence type="evidence at protein level"/>